<organism>
    <name type="scientific">Bos taurus</name>
    <name type="common">Bovine</name>
    <dbReference type="NCBI Taxonomy" id="9913"/>
    <lineage>
        <taxon>Eukaryota</taxon>
        <taxon>Metazoa</taxon>
        <taxon>Chordata</taxon>
        <taxon>Craniata</taxon>
        <taxon>Vertebrata</taxon>
        <taxon>Euteleostomi</taxon>
        <taxon>Mammalia</taxon>
        <taxon>Eutheria</taxon>
        <taxon>Laurasiatheria</taxon>
        <taxon>Artiodactyla</taxon>
        <taxon>Ruminantia</taxon>
        <taxon>Pecora</taxon>
        <taxon>Bovidae</taxon>
        <taxon>Bovinae</taxon>
        <taxon>Bos</taxon>
    </lineage>
</organism>
<gene>
    <name type="primary">CDC42SE1</name>
</gene>
<name>C42S1_BOVIN</name>
<dbReference type="EMBL" id="BT021151">
    <property type="protein sequence ID" value="AAX31333.1"/>
    <property type="molecule type" value="mRNA"/>
</dbReference>
<dbReference type="EMBL" id="BC102825">
    <property type="protein sequence ID" value="AAI02826.1"/>
    <property type="molecule type" value="mRNA"/>
</dbReference>
<dbReference type="RefSeq" id="NP_001030284.1">
    <property type="nucleotide sequence ID" value="NM_001035112.1"/>
</dbReference>
<dbReference type="RefSeq" id="XP_015318260.1">
    <property type="nucleotide sequence ID" value="XM_015462774.3"/>
</dbReference>
<dbReference type="RefSeq" id="XP_024845457.1">
    <property type="nucleotide sequence ID" value="XM_024989689.2"/>
</dbReference>
<dbReference type="FunCoup" id="Q5BIS3">
    <property type="interactions" value="539"/>
</dbReference>
<dbReference type="PaxDb" id="9913-ENSBTAP00000020417"/>
<dbReference type="Ensembl" id="ENSBTAT00000020417.6">
    <property type="protein sequence ID" value="ENSBTAP00000102940.1"/>
    <property type="gene ID" value="ENSBTAG00000015363.6"/>
</dbReference>
<dbReference type="GeneID" id="614042"/>
<dbReference type="KEGG" id="bta:614042"/>
<dbReference type="CTD" id="56882"/>
<dbReference type="VGNC" id="VGNC:27077">
    <property type="gene designation" value="CDC42SE1"/>
</dbReference>
<dbReference type="eggNOG" id="ENOG502S499">
    <property type="taxonomic scope" value="Eukaryota"/>
</dbReference>
<dbReference type="GeneTree" id="ENSGT00940000160112"/>
<dbReference type="HOGENOM" id="CLU_173417_1_0_1"/>
<dbReference type="InParanoid" id="Q5BIS3"/>
<dbReference type="OrthoDB" id="5559822at2759"/>
<dbReference type="TreeFam" id="TF323815"/>
<dbReference type="Proteomes" id="UP000009136">
    <property type="component" value="Chromosome 3"/>
</dbReference>
<dbReference type="GO" id="GO:0030054">
    <property type="term" value="C:cell junction"/>
    <property type="evidence" value="ECO:0007669"/>
    <property type="project" value="Ensembl"/>
</dbReference>
<dbReference type="GO" id="GO:0005737">
    <property type="term" value="C:cytoplasm"/>
    <property type="evidence" value="ECO:0007669"/>
    <property type="project" value="UniProtKB-KW"/>
</dbReference>
<dbReference type="GO" id="GO:0005856">
    <property type="term" value="C:cytoskeleton"/>
    <property type="evidence" value="ECO:0007669"/>
    <property type="project" value="UniProtKB-SubCell"/>
</dbReference>
<dbReference type="GO" id="GO:0005886">
    <property type="term" value="C:plasma membrane"/>
    <property type="evidence" value="ECO:0000318"/>
    <property type="project" value="GO_Central"/>
</dbReference>
<dbReference type="GO" id="GO:0031267">
    <property type="term" value="F:small GTPase binding"/>
    <property type="evidence" value="ECO:0007669"/>
    <property type="project" value="InterPro"/>
</dbReference>
<dbReference type="GO" id="GO:0006909">
    <property type="term" value="P:phagocytosis"/>
    <property type="evidence" value="ECO:0007669"/>
    <property type="project" value="UniProtKB-KW"/>
</dbReference>
<dbReference type="GO" id="GO:0008360">
    <property type="term" value="P:regulation of cell shape"/>
    <property type="evidence" value="ECO:0007669"/>
    <property type="project" value="UniProtKB-KW"/>
</dbReference>
<dbReference type="GO" id="GO:0035023">
    <property type="term" value="P:regulation of Rho protein signal transduction"/>
    <property type="evidence" value="ECO:0007669"/>
    <property type="project" value="InterPro"/>
</dbReference>
<dbReference type="FunFam" id="3.90.810.10:FF:000015">
    <property type="entry name" value="CDC42 small effector protein 1"/>
    <property type="match status" value="1"/>
</dbReference>
<dbReference type="Gene3D" id="3.90.810.10">
    <property type="entry name" value="CRIB domain"/>
    <property type="match status" value="1"/>
</dbReference>
<dbReference type="InterPro" id="IPR000095">
    <property type="entry name" value="CRIB_dom"/>
</dbReference>
<dbReference type="InterPro" id="IPR036936">
    <property type="entry name" value="CRIB_dom_sf"/>
</dbReference>
<dbReference type="InterPro" id="IPR039056">
    <property type="entry name" value="SPEC"/>
</dbReference>
<dbReference type="PANTHER" id="PTHR13502:SF3">
    <property type="entry name" value="CDC42 SMALL EFFECTOR PROTEIN 1"/>
    <property type="match status" value="1"/>
</dbReference>
<dbReference type="PANTHER" id="PTHR13502">
    <property type="entry name" value="CDC42 SMALL EFFECTOR PROTEIN HOMOLOG"/>
    <property type="match status" value="1"/>
</dbReference>
<dbReference type="PROSITE" id="PS50108">
    <property type="entry name" value="CRIB"/>
    <property type="match status" value="1"/>
</dbReference>
<protein>
    <recommendedName>
        <fullName>CDC42 small effector protein 1</fullName>
    </recommendedName>
</protein>
<accession>Q5BIS3</accession>
<keyword id="KW-1003">Cell membrane</keyword>
<keyword id="KW-0133">Cell shape</keyword>
<keyword id="KW-0963">Cytoplasm</keyword>
<keyword id="KW-0206">Cytoskeleton</keyword>
<keyword id="KW-0449">Lipoprotein</keyword>
<keyword id="KW-0472">Membrane</keyword>
<keyword id="KW-0564">Palmitate</keyword>
<keyword id="KW-0581">Phagocytosis</keyword>
<keyword id="KW-1185">Reference proteome</keyword>
<reference key="1">
    <citation type="journal article" date="2005" name="BMC Genomics">
        <title>Characterization of 954 bovine full-CDS cDNA sequences.</title>
        <authorList>
            <person name="Harhay G.P."/>
            <person name="Sonstegard T.S."/>
            <person name="Keele J.W."/>
            <person name="Heaton M.P."/>
            <person name="Clawson M.L."/>
            <person name="Snelling W.M."/>
            <person name="Wiedmann R.T."/>
            <person name="Van Tassell C.P."/>
            <person name="Smith T.P.L."/>
        </authorList>
    </citation>
    <scope>NUCLEOTIDE SEQUENCE [LARGE SCALE MRNA]</scope>
</reference>
<reference key="2">
    <citation type="submission" date="2005-08" db="EMBL/GenBank/DDBJ databases">
        <authorList>
            <consortium name="NIH - Mammalian Gene Collection (MGC) project"/>
        </authorList>
    </citation>
    <scope>NUCLEOTIDE SEQUENCE [LARGE SCALE MRNA]</scope>
    <source>
        <strain>Crossbred X Angus</strain>
        <tissue>Ileum</tissue>
    </source>
</reference>
<feature type="chain" id="PRO_0000334628" description="CDC42 small effector protein 1">
    <location>
        <begin position="1"/>
        <end position="79"/>
    </location>
</feature>
<feature type="domain" description="CRIB" evidence="2">
    <location>
        <begin position="30"/>
        <end position="43"/>
    </location>
</feature>
<feature type="region of interest" description="Disordered" evidence="3">
    <location>
        <begin position="48"/>
        <end position="79"/>
    </location>
</feature>
<feature type="compositionally biased region" description="Basic and acidic residues" evidence="3">
    <location>
        <begin position="63"/>
        <end position="72"/>
    </location>
</feature>
<feature type="lipid moiety-binding region" description="S-palmitoyl cysteine" evidence="1">
    <location>
        <position position="10"/>
    </location>
</feature>
<feature type="lipid moiety-binding region" description="S-palmitoyl cysteine" evidence="1">
    <location>
        <position position="11"/>
    </location>
</feature>
<proteinExistence type="inferred from homology"/>
<comment type="function">
    <text evidence="1">Probably involved in the organization of the actin cytoskeleton by acting downstream of CDC42, inducing actin filament assembly. Alters CDC42-induced cell shape changes. In activated T-cells, may play a role in CDC42-mediated F-actin accumulation at the immunological synapse. May play a role in early contractile events in phagocytosis in macrophages (By similarity).</text>
</comment>
<comment type="subunit">
    <text evidence="1">Interacts with CDC42 (in GTP-bound form). Interacts weakly with RAC1 and not at all with RHOA (By similarity).</text>
</comment>
<comment type="subcellular location">
    <subcellularLocation>
        <location evidence="1">Cytoplasm</location>
        <location evidence="1">Cytoskeleton</location>
    </subcellularLocation>
    <subcellularLocation>
        <location evidence="1">Cell membrane</location>
        <topology evidence="1">Lipid-anchor</topology>
    </subcellularLocation>
</comment>
<comment type="domain">
    <text evidence="1">The CRIB domain mediates interaction with CDC42.</text>
</comment>
<comment type="similarity">
    <text evidence="4">Belongs to the CDC42SE/SPEC family.</text>
</comment>
<evidence type="ECO:0000250" key="1"/>
<evidence type="ECO:0000255" key="2">
    <source>
        <dbReference type="PROSITE-ProRule" id="PRU00057"/>
    </source>
</evidence>
<evidence type="ECO:0000256" key="3">
    <source>
        <dbReference type="SAM" id="MobiDB-lite"/>
    </source>
</evidence>
<evidence type="ECO:0000305" key="4"/>
<sequence length="79" mass="8925">MSEFWHKLGCCVVEKPQPKKKRRRIDRTMIGEPMNFVHLTHIGSGEMGAGDGLAMTGAVQEQMRSKGNRDRPWSNSRGL</sequence>